<organism>
    <name type="scientific">Streptococcus pyogenes serotype M6 (strain ATCC BAA-946 / MGAS10394)</name>
    <dbReference type="NCBI Taxonomy" id="286636"/>
    <lineage>
        <taxon>Bacteria</taxon>
        <taxon>Bacillati</taxon>
        <taxon>Bacillota</taxon>
        <taxon>Bacilli</taxon>
        <taxon>Lactobacillales</taxon>
        <taxon>Streptococcaceae</taxon>
        <taxon>Streptococcus</taxon>
    </lineage>
</organism>
<reference key="1">
    <citation type="journal article" date="2004" name="J. Infect. Dis.">
        <title>Progress toward characterization of the group A Streptococcus metagenome: complete genome sequence of a macrolide-resistant serotype M6 strain.</title>
        <authorList>
            <person name="Banks D.J."/>
            <person name="Porcella S.F."/>
            <person name="Barbian K.D."/>
            <person name="Beres S.B."/>
            <person name="Philips L.E."/>
            <person name="Voyich J.M."/>
            <person name="DeLeo F.R."/>
            <person name="Martin J.M."/>
            <person name="Somerville G.A."/>
            <person name="Musser J.M."/>
        </authorList>
    </citation>
    <scope>NUCLEOTIDE SEQUENCE [LARGE SCALE GENOMIC DNA]</scope>
    <source>
        <strain>ATCC BAA-946 / MGAS10394</strain>
    </source>
</reference>
<name>RL9_STRP6</name>
<sequence>MKVIFLADVKGKGKKGEIKEVLTGYAQNFLIKKNLAKEATSQSIGELKGKQKAEEKAQAEILAEAQAVKAVLDEDKTRVQFQEKVGPDGRTFGSITAKKISEELQKQFGVKVDKRHIVLDHPIRAIGLIEVPVKLHKEVTAEIKLAITEA</sequence>
<accession>Q5X9C4</accession>
<gene>
    <name evidence="1" type="primary">rplI</name>
    <name type="ordered locus">M6_Spy1854</name>
</gene>
<keyword id="KW-0687">Ribonucleoprotein</keyword>
<keyword id="KW-0689">Ribosomal protein</keyword>
<keyword id="KW-0694">RNA-binding</keyword>
<keyword id="KW-0699">rRNA-binding</keyword>
<comment type="function">
    <text evidence="1">Binds to the 23S rRNA.</text>
</comment>
<comment type="similarity">
    <text evidence="1">Belongs to the bacterial ribosomal protein bL9 family.</text>
</comment>
<proteinExistence type="inferred from homology"/>
<dbReference type="EMBL" id="CP000003">
    <property type="protein sequence ID" value="AAT87989.1"/>
    <property type="molecule type" value="Genomic_DNA"/>
</dbReference>
<dbReference type="RefSeq" id="WP_011185098.1">
    <property type="nucleotide sequence ID" value="NC_006086.1"/>
</dbReference>
<dbReference type="SMR" id="Q5X9C4"/>
<dbReference type="KEGG" id="spa:M6_Spy1854"/>
<dbReference type="HOGENOM" id="CLU_078938_3_2_9"/>
<dbReference type="Proteomes" id="UP000001167">
    <property type="component" value="Chromosome"/>
</dbReference>
<dbReference type="GO" id="GO:1990904">
    <property type="term" value="C:ribonucleoprotein complex"/>
    <property type="evidence" value="ECO:0007669"/>
    <property type="project" value="UniProtKB-KW"/>
</dbReference>
<dbReference type="GO" id="GO:0005840">
    <property type="term" value="C:ribosome"/>
    <property type="evidence" value="ECO:0007669"/>
    <property type="project" value="UniProtKB-KW"/>
</dbReference>
<dbReference type="GO" id="GO:0019843">
    <property type="term" value="F:rRNA binding"/>
    <property type="evidence" value="ECO:0007669"/>
    <property type="project" value="UniProtKB-UniRule"/>
</dbReference>
<dbReference type="GO" id="GO:0003735">
    <property type="term" value="F:structural constituent of ribosome"/>
    <property type="evidence" value="ECO:0007669"/>
    <property type="project" value="InterPro"/>
</dbReference>
<dbReference type="GO" id="GO:0006412">
    <property type="term" value="P:translation"/>
    <property type="evidence" value="ECO:0007669"/>
    <property type="project" value="UniProtKB-UniRule"/>
</dbReference>
<dbReference type="FunFam" id="3.40.5.10:FF:000002">
    <property type="entry name" value="50S ribosomal protein L9"/>
    <property type="match status" value="1"/>
</dbReference>
<dbReference type="Gene3D" id="3.10.430.100">
    <property type="entry name" value="Ribosomal protein L9, C-terminal domain"/>
    <property type="match status" value="1"/>
</dbReference>
<dbReference type="Gene3D" id="3.40.5.10">
    <property type="entry name" value="Ribosomal protein L9, N-terminal domain"/>
    <property type="match status" value="1"/>
</dbReference>
<dbReference type="HAMAP" id="MF_00503">
    <property type="entry name" value="Ribosomal_bL9"/>
    <property type="match status" value="1"/>
</dbReference>
<dbReference type="InterPro" id="IPR000244">
    <property type="entry name" value="Ribosomal_bL9"/>
</dbReference>
<dbReference type="InterPro" id="IPR009027">
    <property type="entry name" value="Ribosomal_bL9/RNase_H1_N"/>
</dbReference>
<dbReference type="InterPro" id="IPR020594">
    <property type="entry name" value="Ribosomal_bL9_bac/chp"/>
</dbReference>
<dbReference type="InterPro" id="IPR020069">
    <property type="entry name" value="Ribosomal_bL9_C"/>
</dbReference>
<dbReference type="InterPro" id="IPR036791">
    <property type="entry name" value="Ribosomal_bL9_C_sf"/>
</dbReference>
<dbReference type="InterPro" id="IPR020070">
    <property type="entry name" value="Ribosomal_bL9_N"/>
</dbReference>
<dbReference type="InterPro" id="IPR036935">
    <property type="entry name" value="Ribosomal_bL9_N_sf"/>
</dbReference>
<dbReference type="NCBIfam" id="TIGR00158">
    <property type="entry name" value="L9"/>
    <property type="match status" value="1"/>
</dbReference>
<dbReference type="PANTHER" id="PTHR21368">
    <property type="entry name" value="50S RIBOSOMAL PROTEIN L9"/>
    <property type="match status" value="1"/>
</dbReference>
<dbReference type="Pfam" id="PF03948">
    <property type="entry name" value="Ribosomal_L9_C"/>
    <property type="match status" value="1"/>
</dbReference>
<dbReference type="Pfam" id="PF01281">
    <property type="entry name" value="Ribosomal_L9_N"/>
    <property type="match status" value="1"/>
</dbReference>
<dbReference type="SUPFAM" id="SSF55658">
    <property type="entry name" value="L9 N-domain-like"/>
    <property type="match status" value="1"/>
</dbReference>
<dbReference type="SUPFAM" id="SSF55653">
    <property type="entry name" value="Ribosomal protein L9 C-domain"/>
    <property type="match status" value="1"/>
</dbReference>
<dbReference type="PROSITE" id="PS00651">
    <property type="entry name" value="RIBOSOMAL_L9"/>
    <property type="match status" value="1"/>
</dbReference>
<evidence type="ECO:0000255" key="1">
    <source>
        <dbReference type="HAMAP-Rule" id="MF_00503"/>
    </source>
</evidence>
<evidence type="ECO:0000305" key="2"/>
<feature type="chain" id="PRO_0000176690" description="Large ribosomal subunit protein bL9">
    <location>
        <begin position="1"/>
        <end position="150"/>
    </location>
</feature>
<protein>
    <recommendedName>
        <fullName evidence="1">Large ribosomal subunit protein bL9</fullName>
    </recommendedName>
    <alternativeName>
        <fullName evidence="2">50S ribosomal protein L9</fullName>
    </alternativeName>
</protein>